<name>LIPA_NITMU</name>
<dbReference type="EC" id="2.8.1.8" evidence="1"/>
<dbReference type="EMBL" id="CP000103">
    <property type="protein sequence ID" value="ABB75282.1"/>
    <property type="molecule type" value="Genomic_DNA"/>
</dbReference>
<dbReference type="RefSeq" id="WP_011381302.1">
    <property type="nucleotide sequence ID" value="NC_007614.1"/>
</dbReference>
<dbReference type="SMR" id="Q2Y7I9"/>
<dbReference type="STRING" id="323848.Nmul_A1987"/>
<dbReference type="KEGG" id="nmu:Nmul_A1987"/>
<dbReference type="eggNOG" id="COG0320">
    <property type="taxonomic scope" value="Bacteria"/>
</dbReference>
<dbReference type="HOGENOM" id="CLU_033144_2_1_4"/>
<dbReference type="OrthoDB" id="9787898at2"/>
<dbReference type="UniPathway" id="UPA00538">
    <property type="reaction ID" value="UER00593"/>
</dbReference>
<dbReference type="Proteomes" id="UP000002718">
    <property type="component" value="Chromosome"/>
</dbReference>
<dbReference type="GO" id="GO:0005737">
    <property type="term" value="C:cytoplasm"/>
    <property type="evidence" value="ECO:0007669"/>
    <property type="project" value="UniProtKB-SubCell"/>
</dbReference>
<dbReference type="GO" id="GO:0051539">
    <property type="term" value="F:4 iron, 4 sulfur cluster binding"/>
    <property type="evidence" value="ECO:0007669"/>
    <property type="project" value="UniProtKB-UniRule"/>
</dbReference>
<dbReference type="GO" id="GO:0016992">
    <property type="term" value="F:lipoate synthase activity"/>
    <property type="evidence" value="ECO:0007669"/>
    <property type="project" value="UniProtKB-UniRule"/>
</dbReference>
<dbReference type="GO" id="GO:0046872">
    <property type="term" value="F:metal ion binding"/>
    <property type="evidence" value="ECO:0007669"/>
    <property type="project" value="UniProtKB-KW"/>
</dbReference>
<dbReference type="CDD" id="cd01335">
    <property type="entry name" value="Radical_SAM"/>
    <property type="match status" value="1"/>
</dbReference>
<dbReference type="FunFam" id="3.20.20.70:FF:000023">
    <property type="entry name" value="Lipoyl synthase"/>
    <property type="match status" value="1"/>
</dbReference>
<dbReference type="Gene3D" id="3.20.20.70">
    <property type="entry name" value="Aldolase class I"/>
    <property type="match status" value="1"/>
</dbReference>
<dbReference type="HAMAP" id="MF_00206">
    <property type="entry name" value="Lipoyl_synth"/>
    <property type="match status" value="1"/>
</dbReference>
<dbReference type="InterPro" id="IPR013785">
    <property type="entry name" value="Aldolase_TIM"/>
</dbReference>
<dbReference type="InterPro" id="IPR006638">
    <property type="entry name" value="Elp3/MiaA/NifB-like_rSAM"/>
</dbReference>
<dbReference type="InterPro" id="IPR031691">
    <property type="entry name" value="LIAS_N"/>
</dbReference>
<dbReference type="InterPro" id="IPR003698">
    <property type="entry name" value="Lipoyl_synth"/>
</dbReference>
<dbReference type="InterPro" id="IPR007197">
    <property type="entry name" value="rSAM"/>
</dbReference>
<dbReference type="NCBIfam" id="TIGR00510">
    <property type="entry name" value="lipA"/>
    <property type="match status" value="1"/>
</dbReference>
<dbReference type="NCBIfam" id="NF004019">
    <property type="entry name" value="PRK05481.1"/>
    <property type="match status" value="1"/>
</dbReference>
<dbReference type="NCBIfam" id="NF009544">
    <property type="entry name" value="PRK12928.1"/>
    <property type="match status" value="1"/>
</dbReference>
<dbReference type="PANTHER" id="PTHR10949">
    <property type="entry name" value="LIPOYL SYNTHASE"/>
    <property type="match status" value="1"/>
</dbReference>
<dbReference type="PANTHER" id="PTHR10949:SF0">
    <property type="entry name" value="LIPOYL SYNTHASE, MITOCHONDRIAL"/>
    <property type="match status" value="1"/>
</dbReference>
<dbReference type="Pfam" id="PF16881">
    <property type="entry name" value="LIAS_N"/>
    <property type="match status" value="1"/>
</dbReference>
<dbReference type="Pfam" id="PF04055">
    <property type="entry name" value="Radical_SAM"/>
    <property type="match status" value="1"/>
</dbReference>
<dbReference type="PIRSF" id="PIRSF005963">
    <property type="entry name" value="Lipoyl_synth"/>
    <property type="match status" value="1"/>
</dbReference>
<dbReference type="SFLD" id="SFLDF00271">
    <property type="entry name" value="lipoyl_synthase"/>
    <property type="match status" value="1"/>
</dbReference>
<dbReference type="SFLD" id="SFLDG01058">
    <property type="entry name" value="lipoyl_synthase_like"/>
    <property type="match status" value="1"/>
</dbReference>
<dbReference type="SMART" id="SM00729">
    <property type="entry name" value="Elp3"/>
    <property type="match status" value="1"/>
</dbReference>
<dbReference type="SUPFAM" id="SSF102114">
    <property type="entry name" value="Radical SAM enzymes"/>
    <property type="match status" value="1"/>
</dbReference>
<dbReference type="PROSITE" id="PS51918">
    <property type="entry name" value="RADICAL_SAM"/>
    <property type="match status" value="1"/>
</dbReference>
<evidence type="ECO:0000255" key="1">
    <source>
        <dbReference type="HAMAP-Rule" id="MF_00206"/>
    </source>
</evidence>
<evidence type="ECO:0000255" key="2">
    <source>
        <dbReference type="PROSITE-ProRule" id="PRU01266"/>
    </source>
</evidence>
<sequence length="316" mass="35690">MTIESRQKGVAKTARNPVKIAPQSTDQLLRKPSWIRVRSSNSQEFYEVKRILREQKLHTVCEEASCPNIGECFGKGTATFMILGDLCTRRCPFCDVAHGRPRPPDPEEPLHLAQSIAAMKLKYVVITSVDRDDLRDGGAQHFVDCIREVRAHSPQTKIEILVPDFRGRLDIALEKLFACPPDVMNHNLETVPRLYRQCRPGADYTHSLRLLKEFKARFPGIPTKSGLMLGLGETDEEILDVMRDLRKHDVEMLTIGQYLQPSIGHLPVMRYVTPGAFKEFERAAIEMGFSNAACGPMVRSSYHADQQAHEAGIIQR</sequence>
<protein>
    <recommendedName>
        <fullName evidence="1">Lipoyl synthase</fullName>
        <ecNumber evidence="1">2.8.1.8</ecNumber>
    </recommendedName>
    <alternativeName>
        <fullName evidence="1">Lip-syn</fullName>
        <shortName evidence="1">LS</shortName>
    </alternativeName>
    <alternativeName>
        <fullName evidence="1">Lipoate synthase</fullName>
    </alternativeName>
    <alternativeName>
        <fullName evidence="1">Lipoic acid synthase</fullName>
    </alternativeName>
    <alternativeName>
        <fullName evidence="1">Sulfur insertion protein LipA</fullName>
    </alternativeName>
</protein>
<keyword id="KW-0004">4Fe-4S</keyword>
<keyword id="KW-0963">Cytoplasm</keyword>
<keyword id="KW-0408">Iron</keyword>
<keyword id="KW-0411">Iron-sulfur</keyword>
<keyword id="KW-0479">Metal-binding</keyword>
<keyword id="KW-1185">Reference proteome</keyword>
<keyword id="KW-0949">S-adenosyl-L-methionine</keyword>
<keyword id="KW-0808">Transferase</keyword>
<feature type="chain" id="PRO_1000012245" description="Lipoyl synthase">
    <location>
        <begin position="1"/>
        <end position="316"/>
    </location>
</feature>
<feature type="domain" description="Radical SAM core" evidence="2">
    <location>
        <begin position="73"/>
        <end position="290"/>
    </location>
</feature>
<feature type="binding site" evidence="1">
    <location>
        <position position="61"/>
    </location>
    <ligand>
        <name>[4Fe-4S] cluster</name>
        <dbReference type="ChEBI" id="CHEBI:49883"/>
        <label>1</label>
    </ligand>
</feature>
<feature type="binding site" evidence="1">
    <location>
        <position position="66"/>
    </location>
    <ligand>
        <name>[4Fe-4S] cluster</name>
        <dbReference type="ChEBI" id="CHEBI:49883"/>
        <label>1</label>
    </ligand>
</feature>
<feature type="binding site" evidence="1">
    <location>
        <position position="72"/>
    </location>
    <ligand>
        <name>[4Fe-4S] cluster</name>
        <dbReference type="ChEBI" id="CHEBI:49883"/>
        <label>1</label>
    </ligand>
</feature>
<feature type="binding site" evidence="1">
    <location>
        <position position="87"/>
    </location>
    <ligand>
        <name>[4Fe-4S] cluster</name>
        <dbReference type="ChEBI" id="CHEBI:49883"/>
        <label>2</label>
        <note>4Fe-4S-S-AdoMet</note>
    </ligand>
</feature>
<feature type="binding site" evidence="1">
    <location>
        <position position="91"/>
    </location>
    <ligand>
        <name>[4Fe-4S] cluster</name>
        <dbReference type="ChEBI" id="CHEBI:49883"/>
        <label>2</label>
        <note>4Fe-4S-S-AdoMet</note>
    </ligand>
</feature>
<feature type="binding site" evidence="1">
    <location>
        <position position="94"/>
    </location>
    <ligand>
        <name>[4Fe-4S] cluster</name>
        <dbReference type="ChEBI" id="CHEBI:49883"/>
        <label>2</label>
        <note>4Fe-4S-S-AdoMet</note>
    </ligand>
</feature>
<feature type="binding site" evidence="1">
    <location>
        <position position="301"/>
    </location>
    <ligand>
        <name>[4Fe-4S] cluster</name>
        <dbReference type="ChEBI" id="CHEBI:49883"/>
        <label>1</label>
    </ligand>
</feature>
<accession>Q2Y7I9</accession>
<proteinExistence type="inferred from homology"/>
<reference key="1">
    <citation type="submission" date="2005-08" db="EMBL/GenBank/DDBJ databases">
        <title>Complete sequence of chromosome 1 of Nitrosospira multiformis ATCC 25196.</title>
        <authorList>
            <person name="Copeland A."/>
            <person name="Lucas S."/>
            <person name="Lapidus A."/>
            <person name="Barry K."/>
            <person name="Detter J.C."/>
            <person name="Glavina T."/>
            <person name="Hammon N."/>
            <person name="Israni S."/>
            <person name="Pitluck S."/>
            <person name="Chain P."/>
            <person name="Malfatti S."/>
            <person name="Shin M."/>
            <person name="Vergez L."/>
            <person name="Schmutz J."/>
            <person name="Larimer F."/>
            <person name="Land M."/>
            <person name="Hauser L."/>
            <person name="Kyrpides N."/>
            <person name="Lykidis A."/>
            <person name="Richardson P."/>
        </authorList>
    </citation>
    <scope>NUCLEOTIDE SEQUENCE [LARGE SCALE GENOMIC DNA]</scope>
    <source>
        <strain>ATCC 25196 / NCIMB 11849 / C 71</strain>
    </source>
</reference>
<comment type="function">
    <text evidence="1">Catalyzes the radical-mediated insertion of two sulfur atoms into the C-6 and C-8 positions of the octanoyl moiety bound to the lipoyl domains of lipoate-dependent enzymes, thereby converting the octanoylated domains into lipoylated derivatives.</text>
</comment>
<comment type="catalytic activity">
    <reaction evidence="1">
        <text>[[Fe-S] cluster scaffold protein carrying a second [4Fe-4S](2+) cluster] + N(6)-octanoyl-L-lysyl-[protein] + 2 oxidized [2Fe-2S]-[ferredoxin] + 2 S-adenosyl-L-methionine + 4 H(+) = [[Fe-S] cluster scaffold protein] + N(6)-[(R)-dihydrolipoyl]-L-lysyl-[protein] + 4 Fe(3+) + 2 hydrogen sulfide + 2 5'-deoxyadenosine + 2 L-methionine + 2 reduced [2Fe-2S]-[ferredoxin]</text>
        <dbReference type="Rhea" id="RHEA:16585"/>
        <dbReference type="Rhea" id="RHEA-COMP:9928"/>
        <dbReference type="Rhea" id="RHEA-COMP:10000"/>
        <dbReference type="Rhea" id="RHEA-COMP:10001"/>
        <dbReference type="Rhea" id="RHEA-COMP:10475"/>
        <dbReference type="Rhea" id="RHEA-COMP:14568"/>
        <dbReference type="Rhea" id="RHEA-COMP:14569"/>
        <dbReference type="ChEBI" id="CHEBI:15378"/>
        <dbReference type="ChEBI" id="CHEBI:17319"/>
        <dbReference type="ChEBI" id="CHEBI:29034"/>
        <dbReference type="ChEBI" id="CHEBI:29919"/>
        <dbReference type="ChEBI" id="CHEBI:33722"/>
        <dbReference type="ChEBI" id="CHEBI:33737"/>
        <dbReference type="ChEBI" id="CHEBI:33738"/>
        <dbReference type="ChEBI" id="CHEBI:57844"/>
        <dbReference type="ChEBI" id="CHEBI:59789"/>
        <dbReference type="ChEBI" id="CHEBI:78809"/>
        <dbReference type="ChEBI" id="CHEBI:83100"/>
        <dbReference type="EC" id="2.8.1.8"/>
    </reaction>
</comment>
<comment type="cofactor">
    <cofactor evidence="1">
        <name>[4Fe-4S] cluster</name>
        <dbReference type="ChEBI" id="CHEBI:49883"/>
    </cofactor>
    <text evidence="1">Binds 2 [4Fe-4S] clusters per subunit. One cluster is coordinated with 3 cysteines and an exchangeable S-adenosyl-L-methionine.</text>
</comment>
<comment type="pathway">
    <text evidence="1">Protein modification; protein lipoylation via endogenous pathway; protein N(6)-(lipoyl)lysine from octanoyl-[acyl-carrier-protein]: step 2/2.</text>
</comment>
<comment type="subcellular location">
    <subcellularLocation>
        <location evidence="1">Cytoplasm</location>
    </subcellularLocation>
</comment>
<comment type="similarity">
    <text evidence="1">Belongs to the radical SAM superfamily. Lipoyl synthase family.</text>
</comment>
<gene>
    <name evidence="1" type="primary">lipA</name>
    <name type="ordered locus">Nmul_A1987</name>
</gene>
<organism>
    <name type="scientific">Nitrosospira multiformis (strain ATCC 25196 / NCIMB 11849 / C 71)</name>
    <dbReference type="NCBI Taxonomy" id="323848"/>
    <lineage>
        <taxon>Bacteria</taxon>
        <taxon>Pseudomonadati</taxon>
        <taxon>Pseudomonadota</taxon>
        <taxon>Betaproteobacteria</taxon>
        <taxon>Nitrosomonadales</taxon>
        <taxon>Nitrosomonadaceae</taxon>
        <taxon>Nitrosospira</taxon>
    </lineage>
</organism>